<reference key="1">
    <citation type="journal article" date="2005" name="Science">
        <title>The genome of the basidiomycetous yeast and human pathogen Cryptococcus neoformans.</title>
        <authorList>
            <person name="Loftus B.J."/>
            <person name="Fung E."/>
            <person name="Roncaglia P."/>
            <person name="Rowley D."/>
            <person name="Amedeo P."/>
            <person name="Bruno D."/>
            <person name="Vamathevan J."/>
            <person name="Miranda M."/>
            <person name="Anderson I.J."/>
            <person name="Fraser J.A."/>
            <person name="Allen J.E."/>
            <person name="Bosdet I.E."/>
            <person name="Brent M.R."/>
            <person name="Chiu R."/>
            <person name="Doering T.L."/>
            <person name="Donlin M.J."/>
            <person name="D'Souza C.A."/>
            <person name="Fox D.S."/>
            <person name="Grinberg V."/>
            <person name="Fu J."/>
            <person name="Fukushima M."/>
            <person name="Haas B.J."/>
            <person name="Huang J.C."/>
            <person name="Janbon G."/>
            <person name="Jones S.J.M."/>
            <person name="Koo H.L."/>
            <person name="Krzywinski M.I."/>
            <person name="Kwon-Chung K.J."/>
            <person name="Lengeler K.B."/>
            <person name="Maiti R."/>
            <person name="Marra M.A."/>
            <person name="Marra R.E."/>
            <person name="Mathewson C.A."/>
            <person name="Mitchell T.G."/>
            <person name="Pertea M."/>
            <person name="Riggs F.R."/>
            <person name="Salzberg S.L."/>
            <person name="Schein J.E."/>
            <person name="Shvartsbeyn A."/>
            <person name="Shin H."/>
            <person name="Shumway M."/>
            <person name="Specht C.A."/>
            <person name="Suh B.B."/>
            <person name="Tenney A."/>
            <person name="Utterback T.R."/>
            <person name="Wickes B.L."/>
            <person name="Wortman J.R."/>
            <person name="Wye N.H."/>
            <person name="Kronstad J.W."/>
            <person name="Lodge J.K."/>
            <person name="Heitman J."/>
            <person name="Davis R.W."/>
            <person name="Fraser C.M."/>
            <person name="Hyman R.W."/>
        </authorList>
    </citation>
    <scope>NUCLEOTIDE SEQUENCE [LARGE SCALE GENOMIC DNA]</scope>
    <source>
        <strain>JEC21 / ATCC MYA-565</strain>
    </source>
</reference>
<comment type="function">
    <text evidence="1">Intracellular phospholipase B that catalyzes the double deacylation of phosphatidylcholine (PC) to glycerophosphocholine (GroPCho). Plays an important role in membrane lipid homeostasis. Responsible for the rapid PC turnover in response to inositol, elevated temperatures, or when choline is present in the growth medium (By similarity).</text>
</comment>
<comment type="catalytic activity">
    <reaction>
        <text>a 1-acyl-sn-glycero-3-phosphocholine + H2O = sn-glycerol 3-phosphocholine + a fatty acid + H(+)</text>
        <dbReference type="Rhea" id="RHEA:15177"/>
        <dbReference type="ChEBI" id="CHEBI:15377"/>
        <dbReference type="ChEBI" id="CHEBI:15378"/>
        <dbReference type="ChEBI" id="CHEBI:16870"/>
        <dbReference type="ChEBI" id="CHEBI:28868"/>
        <dbReference type="ChEBI" id="CHEBI:58168"/>
        <dbReference type="EC" id="3.1.1.5"/>
    </reaction>
</comment>
<comment type="activity regulation">
    <text evidence="1">Inhibited by organophosphorus esters.</text>
</comment>
<comment type="subcellular location">
    <subcellularLocation>
        <location evidence="1">Endoplasmic reticulum membrane</location>
        <topology evidence="1">Multi-pass membrane protein</topology>
    </subcellularLocation>
</comment>
<comment type="similarity">
    <text evidence="5">Belongs to the NTE family.</text>
</comment>
<dbReference type="EC" id="3.1.1.5"/>
<dbReference type="EMBL" id="AE017344">
    <property type="protein sequence ID" value="AAW42828.2"/>
    <property type="molecule type" value="Genomic_DNA"/>
</dbReference>
<dbReference type="RefSeq" id="XP_570135.1">
    <property type="nucleotide sequence ID" value="XM_570135.1"/>
</dbReference>
<dbReference type="SMR" id="P0CP36"/>
<dbReference type="FunCoup" id="P0CP36">
    <property type="interactions" value="122"/>
</dbReference>
<dbReference type="STRING" id="214684.P0CP36"/>
<dbReference type="PaxDb" id="214684-P0CP36"/>
<dbReference type="EnsemblFungi" id="AAW42828">
    <property type="protein sequence ID" value="AAW42828"/>
    <property type="gene ID" value="CND04180"/>
</dbReference>
<dbReference type="VEuPathDB" id="FungiDB:CND04180"/>
<dbReference type="eggNOG" id="KOG2968">
    <property type="taxonomic scope" value="Eukaryota"/>
</dbReference>
<dbReference type="InParanoid" id="P0CP36"/>
<dbReference type="OrthoDB" id="421051at2759"/>
<dbReference type="Proteomes" id="UP000002149">
    <property type="component" value="Chromosome 4"/>
</dbReference>
<dbReference type="GO" id="GO:0005783">
    <property type="term" value="C:endoplasmic reticulum"/>
    <property type="evidence" value="ECO:0000318"/>
    <property type="project" value="GO_Central"/>
</dbReference>
<dbReference type="GO" id="GO:0005789">
    <property type="term" value="C:endoplasmic reticulum membrane"/>
    <property type="evidence" value="ECO:0007669"/>
    <property type="project" value="UniProtKB-SubCell"/>
</dbReference>
<dbReference type="GO" id="GO:0004622">
    <property type="term" value="F:lysophospholipase activity"/>
    <property type="evidence" value="ECO:0000318"/>
    <property type="project" value="GO_Central"/>
</dbReference>
<dbReference type="GO" id="GO:0016042">
    <property type="term" value="P:lipid catabolic process"/>
    <property type="evidence" value="ECO:0007669"/>
    <property type="project" value="UniProtKB-KW"/>
</dbReference>
<dbReference type="GO" id="GO:0046470">
    <property type="term" value="P:phosphatidylcholine metabolic process"/>
    <property type="evidence" value="ECO:0007669"/>
    <property type="project" value="InterPro"/>
</dbReference>
<dbReference type="CDD" id="cd00038">
    <property type="entry name" value="CAP_ED"/>
    <property type="match status" value="2"/>
</dbReference>
<dbReference type="CDD" id="cd07227">
    <property type="entry name" value="Pat_Fungal_NTE1"/>
    <property type="match status" value="1"/>
</dbReference>
<dbReference type="FunFam" id="2.60.120.10:FF:000062">
    <property type="entry name" value="Lysophospholipase NTE1"/>
    <property type="match status" value="1"/>
</dbReference>
<dbReference type="FunFam" id="3.40.1090.10:FF:000007">
    <property type="entry name" value="Lysophospholipase NTE1"/>
    <property type="match status" value="1"/>
</dbReference>
<dbReference type="Gene3D" id="3.40.1090.10">
    <property type="entry name" value="Cytosolic phospholipase A2 catalytic domain"/>
    <property type="match status" value="2"/>
</dbReference>
<dbReference type="Gene3D" id="2.60.120.10">
    <property type="entry name" value="Jelly Rolls"/>
    <property type="match status" value="2"/>
</dbReference>
<dbReference type="InterPro" id="IPR016035">
    <property type="entry name" value="Acyl_Trfase/lysoPLipase"/>
</dbReference>
<dbReference type="InterPro" id="IPR000595">
    <property type="entry name" value="cNMP-bd_dom"/>
</dbReference>
<dbReference type="InterPro" id="IPR018490">
    <property type="entry name" value="cNMP-bd_dom_sf"/>
</dbReference>
<dbReference type="InterPro" id="IPR001423">
    <property type="entry name" value="LysoPLipase_patatin_CS"/>
</dbReference>
<dbReference type="InterPro" id="IPR050301">
    <property type="entry name" value="NTE"/>
</dbReference>
<dbReference type="InterPro" id="IPR056556">
    <property type="entry name" value="NTE1_P-loop_dom"/>
</dbReference>
<dbReference type="InterPro" id="IPR002641">
    <property type="entry name" value="PNPLA_dom"/>
</dbReference>
<dbReference type="InterPro" id="IPR014710">
    <property type="entry name" value="RmlC-like_jellyroll"/>
</dbReference>
<dbReference type="PANTHER" id="PTHR14226:SF29">
    <property type="entry name" value="NEUROPATHY TARGET ESTERASE SWS"/>
    <property type="match status" value="1"/>
</dbReference>
<dbReference type="PANTHER" id="PTHR14226">
    <property type="entry name" value="NEUROPATHY TARGET ESTERASE/SWISS CHEESE D.MELANOGASTER"/>
    <property type="match status" value="1"/>
</dbReference>
<dbReference type="Pfam" id="PF00027">
    <property type="entry name" value="cNMP_binding"/>
    <property type="match status" value="1"/>
</dbReference>
<dbReference type="Pfam" id="PF24179">
    <property type="entry name" value="NTE_Ploop"/>
    <property type="match status" value="1"/>
</dbReference>
<dbReference type="Pfam" id="PF01734">
    <property type="entry name" value="Patatin"/>
    <property type="match status" value="1"/>
</dbReference>
<dbReference type="SMART" id="SM00100">
    <property type="entry name" value="cNMP"/>
    <property type="match status" value="2"/>
</dbReference>
<dbReference type="SUPFAM" id="SSF51206">
    <property type="entry name" value="cAMP-binding domain-like"/>
    <property type="match status" value="3"/>
</dbReference>
<dbReference type="SUPFAM" id="SSF52151">
    <property type="entry name" value="FabD/lysophospholipase-like"/>
    <property type="match status" value="1"/>
</dbReference>
<dbReference type="PROSITE" id="PS50042">
    <property type="entry name" value="CNMP_BINDING_3"/>
    <property type="match status" value="2"/>
</dbReference>
<dbReference type="PROSITE" id="PS51635">
    <property type="entry name" value="PNPLA"/>
    <property type="match status" value="1"/>
</dbReference>
<dbReference type="PROSITE" id="PS01237">
    <property type="entry name" value="UPF0028"/>
    <property type="match status" value="1"/>
</dbReference>
<proteinExistence type="inferred from homology"/>
<protein>
    <recommendedName>
        <fullName>Lysophospholipase NTE1</fullName>
        <ecNumber>3.1.1.5</ecNumber>
    </recommendedName>
    <alternativeName>
        <fullName>Intracellular phospholipase B</fullName>
    </alternativeName>
    <alternativeName>
        <fullName>Neuropathy target esterase homolog</fullName>
    </alternativeName>
</protein>
<gene>
    <name type="primary">NTE1</name>
    <name type="ordered locus">CND04180</name>
</gene>
<organism>
    <name type="scientific">Cryptococcus neoformans var. neoformans serotype D (strain JEC21 / ATCC MYA-565)</name>
    <name type="common">Filobasidiella neoformans</name>
    <dbReference type="NCBI Taxonomy" id="214684"/>
    <lineage>
        <taxon>Eukaryota</taxon>
        <taxon>Fungi</taxon>
        <taxon>Dikarya</taxon>
        <taxon>Basidiomycota</taxon>
        <taxon>Agaricomycotina</taxon>
        <taxon>Tremellomycetes</taxon>
        <taxon>Tremellales</taxon>
        <taxon>Cryptococcaceae</taxon>
        <taxon>Cryptococcus</taxon>
        <taxon>Cryptococcus neoformans species complex</taxon>
    </lineage>
</organism>
<accession>P0CP36</accession>
<accession>Q55U92</accession>
<accession>Q5KI53</accession>
<name>NTE1_CRYNJ</name>
<keyword id="KW-0256">Endoplasmic reticulum</keyword>
<keyword id="KW-0378">Hydrolase</keyword>
<keyword id="KW-0442">Lipid degradation</keyword>
<keyword id="KW-0443">Lipid metabolism</keyword>
<keyword id="KW-0472">Membrane</keyword>
<keyword id="KW-1185">Reference proteome</keyword>
<keyword id="KW-0677">Repeat</keyword>
<keyword id="KW-0812">Transmembrane</keyword>
<keyword id="KW-1133">Transmembrane helix</keyword>
<evidence type="ECO:0000250" key="1"/>
<evidence type="ECO:0000255" key="2"/>
<evidence type="ECO:0000255" key="3">
    <source>
        <dbReference type="PROSITE-ProRule" id="PRU01161"/>
    </source>
</evidence>
<evidence type="ECO:0000256" key="4">
    <source>
        <dbReference type="SAM" id="MobiDB-lite"/>
    </source>
</evidence>
<evidence type="ECO:0000305" key="5"/>
<sequence>MSSIPTPPDANGNPLIALAVAVIYAILYVLQGVKYGVSLLTIGIPSCIVRMLQYSLTISLGFPHLLALFAGALLALFFLIRYRYLTRYAQLKESALPPPSPPALASRLLPLDGDGLGLPDSRSQTSSFHNYLDDFLSAIRIFGYLEKPVFHELSRHLQTRRLAAGDTLEIGGGEFWCVVEGKVQVFAPDASSQGTPTPSSDTNSPTRPSFNGYHLLNEVSTGGTLSSLFSILSLFTEDIKLSWKSSADDEGEEEQIFEGAPEQSSAKLRVRRANSDVSQLGPDSIGVRAMDPTPLPESIDSHGDSSVPQRRRERSSSIDAAGETVREREGIFASASLPISSTEPPSPRRSQSLRSSPRLNSATNLLSSQSEHLRSSVPRKAGIEIGSKALKGTIARATEDTTLAVIPAAAFRKLTRKFPKASGTIVQVVLERFSRVTFMTAHKYLGLTREILQTESSLNLLVTHPLPRSFYTGGGMQALRARFQPEALAKESVHYDSLKSSPNARVSSKDYFNYVPASPTVKAPSLPAMTPKPLSPIIHKSSLGQTATTTVKNEPLNGGSSPLDETRDKVPSFGLSTAAATNPDASFRHASPFIRRTSAMRQQVAAGDLAMSVHNLPDESGQAYYRPTAITPGLSKMDTWQRRYSSSWNLNDSPHTDGQPVDPQRDDESLLNESFDLKEAVLNSIAKSIGLYQEAESNSDMIARSSMAPSVSALSTPNSPMFPPNAGTPLQGSTRSRPPHFGNVLDLINASSQNEGVIGGMLREAAFNSRPDDEASSISMSLHDSQGGASGVDRKIMKDLERHVEILFFKKGSVLVKEGERSPGMYYVIDGFLETSLPFRSTSSNQENPNSTPGSKHRQSSFGSSNERPFKTALGLDTSKGKELDDGSKKDEALFTVKPGGIAGYLSSLCCTDSYVDITAKTDCFVGFLPHHTLERIIERRPIVLLTLAKRLLSLLSPLVLHIDAALDWQQLNAGQVLYEKGDKSTDFYIVINGRLRAFTEKNDNMHVLREYGQNDSIGELDVITAVDRSETVHAIRDSELVRIPAALFDAISIKHPETTVQFMRLIAGRVRRALGDEMNGRVPGLPTTDMNLKTVCVLGSTRNVPVTQFAGKLKNALEEIGASTSYLDQGIVMRHLGRHAFARIGKLKVAGWLADQEQHYRTVLYVADSPPASQWTLTCIRQADLVLVVSMGDDPSLGEYEKLLLATKTTARKELILLHDERTVAPGSTRQWLSNRPWIQTHYHVELPGVVTPARPIPPVHDAAAIAAFKHLREQVETRIKKYRGLRPFTRPRRPPHMNDFARIARRLCGQQIGLVLGGGGARGISHIGMLQALEEFGIPIDAIGGCSIGSFVGGLYARETDLLETAGRTKQFSGRMGSMWRILSDVTYPFVSYTTGHEFNRGIYKAFYNTHIEDFWIPFFANSTNITHSRMEVHRTGYAWRYVRASMTLAGLLPPLSDNGNLLVDGGYMDNTPIQPLRENGIRDIIVVDVGSVDDTSPRDYGDSVSGWWIFFNRFNPFYERRVLSMTEISSRLTYVSSVKTLEGVKATPGCHYIAMPVQQFDTLGGFKRFSEVMEIGLKAGRETLKKWKEEGKLPTGLVDEAKGSKAVQRGNRLRRMSI</sequence>
<feature type="chain" id="PRO_0000295318" description="Lysophospholipase NTE1">
    <location>
        <begin position="1"/>
        <end position="1621"/>
    </location>
</feature>
<feature type="topological domain" description="Cytoplasmic" evidence="1">
    <location>
        <begin position="1"/>
        <end position="12"/>
    </location>
</feature>
<feature type="transmembrane region" description="Helical" evidence="2">
    <location>
        <begin position="13"/>
        <end position="33"/>
    </location>
</feature>
<feature type="topological domain" description="Lumenal" evidence="1">
    <location>
        <begin position="34"/>
        <end position="59"/>
    </location>
</feature>
<feature type="transmembrane region" description="Helical" evidence="2">
    <location>
        <begin position="60"/>
        <end position="80"/>
    </location>
</feature>
<feature type="topological domain" description="Cytoplasmic" evidence="1">
    <location>
        <begin position="81"/>
        <end position="1621"/>
    </location>
</feature>
<feature type="domain" description="PNPLA" evidence="3">
    <location>
        <begin position="1316"/>
        <end position="1480"/>
    </location>
</feature>
<feature type="region of interest" description="Disordered" evidence="4">
    <location>
        <begin position="188"/>
        <end position="209"/>
    </location>
</feature>
<feature type="region of interest" description="Disordered" evidence="4">
    <location>
        <begin position="250"/>
        <end position="379"/>
    </location>
</feature>
<feature type="region of interest" description="Disordered" evidence="4">
    <location>
        <begin position="545"/>
        <end position="566"/>
    </location>
</feature>
<feature type="region of interest" description="Disordered" evidence="4">
    <location>
        <begin position="648"/>
        <end position="667"/>
    </location>
</feature>
<feature type="region of interest" description="Disordered" evidence="4">
    <location>
        <begin position="711"/>
        <end position="735"/>
    </location>
</feature>
<feature type="region of interest" description="Disordered" evidence="4">
    <location>
        <begin position="772"/>
        <end position="791"/>
    </location>
</feature>
<feature type="region of interest" description="Disordered" evidence="4">
    <location>
        <begin position="839"/>
        <end position="870"/>
    </location>
</feature>
<feature type="short sequence motif" description="GXGXXG" evidence="3">
    <location>
        <begin position="1320"/>
        <end position="1325"/>
    </location>
</feature>
<feature type="short sequence motif" description="GXSXG" evidence="3">
    <location>
        <begin position="1347"/>
        <end position="1351"/>
    </location>
</feature>
<feature type="short sequence motif" description="DGA/G" evidence="3">
    <location>
        <begin position="1467"/>
        <end position="1469"/>
    </location>
</feature>
<feature type="compositionally biased region" description="Low complexity" evidence="4">
    <location>
        <begin position="195"/>
        <end position="209"/>
    </location>
</feature>
<feature type="compositionally biased region" description="Low complexity" evidence="4">
    <location>
        <begin position="348"/>
        <end position="361"/>
    </location>
</feature>
<feature type="compositionally biased region" description="Polar residues" evidence="4">
    <location>
        <begin position="839"/>
        <end position="867"/>
    </location>
</feature>
<feature type="active site" description="Nucleophile" evidence="3">
    <location>
        <position position="1349"/>
    </location>
</feature>
<feature type="active site" description="Proton acceptor" evidence="3">
    <location>
        <position position="1467"/>
    </location>
</feature>
<feature type="binding site">
    <location>
        <begin position="788"/>
        <end position="907"/>
    </location>
    <ligand>
        <name>a nucleoside 3',5'-cyclic phosphate</name>
        <dbReference type="ChEBI" id="CHEBI:58464"/>
        <label>1</label>
    </ligand>
</feature>
<feature type="binding site">
    <location>
        <begin position="951"/>
        <end position="1070"/>
    </location>
    <ligand>
        <name>a nucleoside 3',5'-cyclic phosphate</name>
        <dbReference type="ChEBI" id="CHEBI:58464"/>
        <label>2</label>
    </ligand>
</feature>